<name>DAPA_CALBD</name>
<accession>B9MRD1</accession>
<gene>
    <name evidence="1" type="primary">dapA</name>
    <name type="ordered locus">Athe_1134</name>
</gene>
<protein>
    <recommendedName>
        <fullName evidence="1">4-hydroxy-tetrahydrodipicolinate synthase</fullName>
        <shortName evidence="1">HTPA synthase</shortName>
        <ecNumber evidence="1">4.3.3.7</ecNumber>
    </recommendedName>
</protein>
<proteinExistence type="inferred from homology"/>
<organism>
    <name type="scientific">Caldicellulosiruptor bescii (strain ATCC BAA-1888 / DSM 6725 / KCTC 15123 / Z-1320)</name>
    <name type="common">Anaerocellum thermophilum</name>
    <dbReference type="NCBI Taxonomy" id="521460"/>
    <lineage>
        <taxon>Bacteria</taxon>
        <taxon>Bacillati</taxon>
        <taxon>Bacillota</taxon>
        <taxon>Bacillota incertae sedis</taxon>
        <taxon>Caldicellulosiruptorales</taxon>
        <taxon>Caldicellulosiruptoraceae</taxon>
        <taxon>Caldicellulosiruptor</taxon>
    </lineage>
</organism>
<sequence>MSLFKGSGVALITPFKDEESVDFETLGRLVDFHLEHKTDAIIVCGTTGEPSTMPDDEHLEVIRFVIDRVAGRKPVIAGVGSNHTKHAVYLSKKAQELGADGLLHVTPYYNKTTQKGLIEHFKEINDAVSIPIIVYNVPSRTGLNVLPETMKELAKLPNVKAIKEASGNITQVAEIAMLCPEIDIYSGNDDQIVPILSVGGIGVISVLANILPDETHDIVEYFLNGEIEKARELQLKLLPIIKALFIEVNPIPVKEAMNMMGFNVGKPRLPLTTMTEKNREILKKALVDYGISVKE</sequence>
<keyword id="KW-0028">Amino-acid biosynthesis</keyword>
<keyword id="KW-0963">Cytoplasm</keyword>
<keyword id="KW-0220">Diaminopimelate biosynthesis</keyword>
<keyword id="KW-0456">Lyase</keyword>
<keyword id="KW-0457">Lysine biosynthesis</keyword>
<keyword id="KW-0704">Schiff base</keyword>
<feature type="chain" id="PRO_1000134857" description="4-hydroxy-tetrahydrodipicolinate synthase">
    <location>
        <begin position="1"/>
        <end position="295"/>
    </location>
</feature>
<feature type="active site" description="Proton donor/acceptor" evidence="1">
    <location>
        <position position="135"/>
    </location>
</feature>
<feature type="active site" description="Schiff-base intermediate with substrate" evidence="1">
    <location>
        <position position="163"/>
    </location>
</feature>
<feature type="binding site" evidence="1">
    <location>
        <position position="47"/>
    </location>
    <ligand>
        <name>pyruvate</name>
        <dbReference type="ChEBI" id="CHEBI:15361"/>
    </ligand>
</feature>
<feature type="binding site" evidence="1">
    <location>
        <position position="204"/>
    </location>
    <ligand>
        <name>pyruvate</name>
        <dbReference type="ChEBI" id="CHEBI:15361"/>
    </ligand>
</feature>
<feature type="site" description="Part of a proton relay during catalysis" evidence="1">
    <location>
        <position position="46"/>
    </location>
</feature>
<feature type="site" description="Part of a proton relay during catalysis" evidence="1">
    <location>
        <position position="109"/>
    </location>
</feature>
<comment type="function">
    <text evidence="1">Catalyzes the condensation of (S)-aspartate-beta-semialdehyde [(S)-ASA] and pyruvate to 4-hydroxy-tetrahydrodipicolinate (HTPA).</text>
</comment>
<comment type="catalytic activity">
    <reaction evidence="1">
        <text>L-aspartate 4-semialdehyde + pyruvate = (2S,4S)-4-hydroxy-2,3,4,5-tetrahydrodipicolinate + H2O + H(+)</text>
        <dbReference type="Rhea" id="RHEA:34171"/>
        <dbReference type="ChEBI" id="CHEBI:15361"/>
        <dbReference type="ChEBI" id="CHEBI:15377"/>
        <dbReference type="ChEBI" id="CHEBI:15378"/>
        <dbReference type="ChEBI" id="CHEBI:67139"/>
        <dbReference type="ChEBI" id="CHEBI:537519"/>
        <dbReference type="EC" id="4.3.3.7"/>
    </reaction>
</comment>
<comment type="pathway">
    <text evidence="1">Amino-acid biosynthesis; L-lysine biosynthesis via DAP pathway; (S)-tetrahydrodipicolinate from L-aspartate: step 3/4.</text>
</comment>
<comment type="subunit">
    <text evidence="1">Homotetramer; dimer of dimers.</text>
</comment>
<comment type="subcellular location">
    <subcellularLocation>
        <location evidence="1">Cytoplasm</location>
    </subcellularLocation>
</comment>
<comment type="similarity">
    <text evidence="1">Belongs to the DapA family.</text>
</comment>
<comment type="caution">
    <text evidence="2">Was originally thought to be a dihydrodipicolinate synthase (DHDPS), catalyzing the condensation of (S)-aspartate-beta-semialdehyde [(S)-ASA] and pyruvate to dihydrodipicolinate (DHDP). However, it was shown in E.coli that the product of the enzymatic reaction is not dihydrodipicolinate but in fact (4S)-4-hydroxy-2,3,4,5-tetrahydro-(2S)-dipicolinic acid (HTPA), and that the consecutive dehydration reaction leading to DHDP is not spontaneous but catalyzed by DapB.</text>
</comment>
<reference key="1">
    <citation type="submission" date="2009-01" db="EMBL/GenBank/DDBJ databases">
        <title>Complete sequence of chromosome of Caldicellulosiruptor becscii DSM 6725.</title>
        <authorList>
            <person name="Lucas S."/>
            <person name="Copeland A."/>
            <person name="Lapidus A."/>
            <person name="Glavina del Rio T."/>
            <person name="Tice H."/>
            <person name="Bruce D."/>
            <person name="Goodwin L."/>
            <person name="Pitluck S."/>
            <person name="Sims D."/>
            <person name="Meincke L."/>
            <person name="Brettin T."/>
            <person name="Detter J.C."/>
            <person name="Han C."/>
            <person name="Larimer F."/>
            <person name="Land M."/>
            <person name="Hauser L."/>
            <person name="Kyrpides N."/>
            <person name="Ovchinnikova G."/>
            <person name="Kataeva I."/>
            <person name="Adams M.W.W."/>
        </authorList>
    </citation>
    <scope>NUCLEOTIDE SEQUENCE [LARGE SCALE GENOMIC DNA]</scope>
    <source>
        <strain>ATCC BAA-1888 / DSM 6725 / KCTC 15123 / Z-1320</strain>
    </source>
</reference>
<evidence type="ECO:0000255" key="1">
    <source>
        <dbReference type="HAMAP-Rule" id="MF_00418"/>
    </source>
</evidence>
<evidence type="ECO:0000305" key="2"/>
<dbReference type="EC" id="4.3.3.7" evidence="1"/>
<dbReference type="EMBL" id="CP001393">
    <property type="protein sequence ID" value="ACM60235.1"/>
    <property type="molecule type" value="Genomic_DNA"/>
</dbReference>
<dbReference type="RefSeq" id="WP_015907634.1">
    <property type="nucleotide sequence ID" value="NC_012034.1"/>
</dbReference>
<dbReference type="SMR" id="B9MRD1"/>
<dbReference type="STRING" id="521460.Athe_1134"/>
<dbReference type="GeneID" id="31772484"/>
<dbReference type="KEGG" id="ate:Athe_1134"/>
<dbReference type="eggNOG" id="COG0329">
    <property type="taxonomic scope" value="Bacteria"/>
</dbReference>
<dbReference type="HOGENOM" id="CLU_049343_7_1_9"/>
<dbReference type="UniPathway" id="UPA00034">
    <property type="reaction ID" value="UER00017"/>
</dbReference>
<dbReference type="Proteomes" id="UP000007723">
    <property type="component" value="Chromosome"/>
</dbReference>
<dbReference type="GO" id="GO:0005829">
    <property type="term" value="C:cytosol"/>
    <property type="evidence" value="ECO:0007669"/>
    <property type="project" value="TreeGrafter"/>
</dbReference>
<dbReference type="GO" id="GO:0008840">
    <property type="term" value="F:4-hydroxy-tetrahydrodipicolinate synthase activity"/>
    <property type="evidence" value="ECO:0007669"/>
    <property type="project" value="UniProtKB-UniRule"/>
</dbReference>
<dbReference type="GO" id="GO:0019877">
    <property type="term" value="P:diaminopimelate biosynthetic process"/>
    <property type="evidence" value="ECO:0007669"/>
    <property type="project" value="UniProtKB-UniRule"/>
</dbReference>
<dbReference type="GO" id="GO:0009089">
    <property type="term" value="P:lysine biosynthetic process via diaminopimelate"/>
    <property type="evidence" value="ECO:0007669"/>
    <property type="project" value="UniProtKB-UniRule"/>
</dbReference>
<dbReference type="CDD" id="cd00950">
    <property type="entry name" value="DHDPS"/>
    <property type="match status" value="1"/>
</dbReference>
<dbReference type="Gene3D" id="3.20.20.70">
    <property type="entry name" value="Aldolase class I"/>
    <property type="match status" value="1"/>
</dbReference>
<dbReference type="HAMAP" id="MF_00418">
    <property type="entry name" value="DapA"/>
    <property type="match status" value="1"/>
</dbReference>
<dbReference type="InterPro" id="IPR013785">
    <property type="entry name" value="Aldolase_TIM"/>
</dbReference>
<dbReference type="InterPro" id="IPR005263">
    <property type="entry name" value="DapA"/>
</dbReference>
<dbReference type="InterPro" id="IPR002220">
    <property type="entry name" value="DapA-like"/>
</dbReference>
<dbReference type="InterPro" id="IPR020625">
    <property type="entry name" value="Schiff_base-form_aldolases_AS"/>
</dbReference>
<dbReference type="NCBIfam" id="TIGR00674">
    <property type="entry name" value="dapA"/>
    <property type="match status" value="1"/>
</dbReference>
<dbReference type="PANTHER" id="PTHR12128:SF66">
    <property type="entry name" value="4-HYDROXY-2-OXOGLUTARATE ALDOLASE, MITOCHONDRIAL"/>
    <property type="match status" value="1"/>
</dbReference>
<dbReference type="PANTHER" id="PTHR12128">
    <property type="entry name" value="DIHYDRODIPICOLINATE SYNTHASE"/>
    <property type="match status" value="1"/>
</dbReference>
<dbReference type="Pfam" id="PF00701">
    <property type="entry name" value="DHDPS"/>
    <property type="match status" value="1"/>
</dbReference>
<dbReference type="PIRSF" id="PIRSF001365">
    <property type="entry name" value="DHDPS"/>
    <property type="match status" value="1"/>
</dbReference>
<dbReference type="PRINTS" id="PR00146">
    <property type="entry name" value="DHPICSNTHASE"/>
</dbReference>
<dbReference type="SMART" id="SM01130">
    <property type="entry name" value="DHDPS"/>
    <property type="match status" value="1"/>
</dbReference>
<dbReference type="SUPFAM" id="SSF51569">
    <property type="entry name" value="Aldolase"/>
    <property type="match status" value="1"/>
</dbReference>
<dbReference type="PROSITE" id="PS00666">
    <property type="entry name" value="DHDPS_2"/>
    <property type="match status" value="1"/>
</dbReference>